<dbReference type="EC" id="2.1.1.-" evidence="1"/>
<dbReference type="EMBL" id="CM003144">
    <property type="protein sequence ID" value="KIS69956.1"/>
    <property type="molecule type" value="Genomic_DNA"/>
</dbReference>
<dbReference type="RefSeq" id="XP_011388750.1">
    <property type="nucleotide sequence ID" value="XM_011390448.1"/>
</dbReference>
<dbReference type="STRING" id="237631.Q4PBP5"/>
<dbReference type="EnsemblFungi" id="KIS69956">
    <property type="protein sequence ID" value="KIS69956"/>
    <property type="gene ID" value="UMAG_02468"/>
</dbReference>
<dbReference type="GeneID" id="23563208"/>
<dbReference type="KEGG" id="uma:UMAG_02468"/>
<dbReference type="VEuPathDB" id="FungiDB:UMAG_02468"/>
<dbReference type="eggNOG" id="KOG2084">
    <property type="taxonomic scope" value="Eukaryota"/>
</dbReference>
<dbReference type="HOGENOM" id="CLU_031650_0_0_1"/>
<dbReference type="InParanoid" id="Q4PBP5"/>
<dbReference type="OMA" id="CEPNVRY"/>
<dbReference type="OrthoDB" id="438641at2759"/>
<dbReference type="Proteomes" id="UP000000561">
    <property type="component" value="Chromosome 5"/>
</dbReference>
<dbReference type="GO" id="GO:0005694">
    <property type="term" value="C:chromosome"/>
    <property type="evidence" value="ECO:0007669"/>
    <property type="project" value="UniProtKB-SubCell"/>
</dbReference>
<dbReference type="GO" id="GO:0005737">
    <property type="term" value="C:cytoplasm"/>
    <property type="evidence" value="ECO:0007669"/>
    <property type="project" value="UniProtKB-SubCell"/>
</dbReference>
<dbReference type="GO" id="GO:0005634">
    <property type="term" value="C:nucleus"/>
    <property type="evidence" value="ECO:0007669"/>
    <property type="project" value="UniProtKB-SubCell"/>
</dbReference>
<dbReference type="GO" id="GO:0042799">
    <property type="term" value="F:histone H4K20 methyltransferase activity"/>
    <property type="evidence" value="ECO:0000318"/>
    <property type="project" value="GO_Central"/>
</dbReference>
<dbReference type="GO" id="GO:0032259">
    <property type="term" value="P:methylation"/>
    <property type="evidence" value="ECO:0007669"/>
    <property type="project" value="UniProtKB-KW"/>
</dbReference>
<dbReference type="GO" id="GO:0045814">
    <property type="term" value="P:negative regulation of gene expression, epigenetic"/>
    <property type="evidence" value="ECO:0000318"/>
    <property type="project" value="GO_Central"/>
</dbReference>
<dbReference type="CDD" id="cd20071">
    <property type="entry name" value="SET_SMYD"/>
    <property type="match status" value="1"/>
</dbReference>
<dbReference type="Gene3D" id="1.10.220.160">
    <property type="match status" value="1"/>
</dbReference>
<dbReference type="Gene3D" id="6.10.140.2220">
    <property type="match status" value="1"/>
</dbReference>
<dbReference type="Gene3D" id="2.170.270.10">
    <property type="entry name" value="SET domain"/>
    <property type="match status" value="1"/>
</dbReference>
<dbReference type="InterPro" id="IPR001214">
    <property type="entry name" value="SET_dom"/>
</dbReference>
<dbReference type="InterPro" id="IPR046341">
    <property type="entry name" value="SET_dom_sf"/>
</dbReference>
<dbReference type="PANTHER" id="PTHR46402:SF2">
    <property type="entry name" value="HISTONE-LYSINE N-TRIMETHYLTRANSFERASE SMYD5"/>
    <property type="match status" value="1"/>
</dbReference>
<dbReference type="PANTHER" id="PTHR46402">
    <property type="entry name" value="SET AND MYND DOMAIN-CONTAINING PROTEIN 5"/>
    <property type="match status" value="1"/>
</dbReference>
<dbReference type="Pfam" id="PF00856">
    <property type="entry name" value="SET"/>
    <property type="match status" value="1"/>
</dbReference>
<dbReference type="SUPFAM" id="SSF82199">
    <property type="entry name" value="SET domain"/>
    <property type="match status" value="1"/>
</dbReference>
<dbReference type="PROSITE" id="PS50280">
    <property type="entry name" value="SET"/>
    <property type="match status" value="1"/>
</dbReference>
<name>SET5_MYCMD</name>
<sequence length="498" mass="54945">MVAPSETQIVQAVKAKLESGLTSTSDVVREDEVRRLLATLELEHDWQDIAVKKFISILCKHSLMPVSKPNDGCTSRSTSCPGGKKKKKSKTDTSIPKSFIDPTISFPAGIRGVYFDPVKGKGLVATRSFSKGDLLFTEDAYIPTPPPEAFDQMASGQLCAQCFLPISSAPVALAIKNCSKCKHRFCTTACYKTAMATHHTLLCTGINASAKPLIELIERQKWQSLHCVARSLARLLMTLTRQYHGQANKKADTQDSVATYGDFETVYARLSSFATVSELERRSRNPGWTTEKASFESILVEAHTALCNALDPYSSTRNANLEPFHVSADYLDSTRKPLIKDLFCLATFMKLVGRANINMEKFGGLYSLHSFLNHSCSPNLEIRHVPERAILSSMKVAAIALCDIHPDDELVISYIDPNTSLARRQLLLYRDYCFGPCTCDKCTTQLGALGLVYDPAKHAVKAFLDSVAHKTRPDPDHTLPPTSQDSTLEDQLRASLGF</sequence>
<gene>
    <name type="primary">SET5</name>
    <name type="ORF">UMAG_02468</name>
</gene>
<protein>
    <recommendedName>
        <fullName>Histone-lysine N-methyltransferase SET5</fullName>
        <ecNumber evidence="1">2.1.1.-</ecNumber>
    </recommendedName>
    <alternativeName>
        <fullName>SET domain-containing protein 5</fullName>
    </alternativeName>
</protein>
<organism>
    <name type="scientific">Mycosarcoma maydis</name>
    <name type="common">Corn smut fungus</name>
    <name type="synonym">Ustilago maydis</name>
    <dbReference type="NCBI Taxonomy" id="5270"/>
    <lineage>
        <taxon>Eukaryota</taxon>
        <taxon>Fungi</taxon>
        <taxon>Dikarya</taxon>
        <taxon>Basidiomycota</taxon>
        <taxon>Ustilaginomycotina</taxon>
        <taxon>Ustilaginomycetes</taxon>
        <taxon>Ustilaginales</taxon>
        <taxon>Ustilaginaceae</taxon>
        <taxon>Mycosarcoma</taxon>
    </lineage>
</organism>
<keyword id="KW-0158">Chromosome</keyword>
<keyword id="KW-0963">Cytoplasm</keyword>
<keyword id="KW-0489">Methyltransferase</keyword>
<keyword id="KW-0539">Nucleus</keyword>
<keyword id="KW-1185">Reference proteome</keyword>
<keyword id="KW-0949">S-adenosyl-L-methionine</keyword>
<keyword id="KW-0808">Transferase</keyword>
<feature type="chain" id="PRO_0000324472" description="Histone-lysine N-methyltransferase SET5">
    <location>
        <begin position="1"/>
        <end position="498"/>
    </location>
</feature>
<feature type="domain" description="SET" evidence="2">
    <location>
        <begin position="108"/>
        <end position="415"/>
    </location>
</feature>
<feature type="region of interest" description="Disordered" evidence="3">
    <location>
        <begin position="68"/>
        <end position="94"/>
    </location>
</feature>
<evidence type="ECO:0000250" key="1">
    <source>
        <dbReference type="UniProtKB" id="P38890"/>
    </source>
</evidence>
<evidence type="ECO:0000255" key="2">
    <source>
        <dbReference type="PROSITE-ProRule" id="PRU00190"/>
    </source>
</evidence>
<evidence type="ECO:0000256" key="3">
    <source>
        <dbReference type="SAM" id="MobiDB-lite"/>
    </source>
</evidence>
<reference key="1">
    <citation type="journal article" date="2006" name="Nature">
        <title>Insights from the genome of the biotrophic fungal plant pathogen Ustilago maydis.</title>
        <authorList>
            <person name="Kaemper J."/>
            <person name="Kahmann R."/>
            <person name="Boelker M."/>
            <person name="Ma L.-J."/>
            <person name="Brefort T."/>
            <person name="Saville B.J."/>
            <person name="Banuett F."/>
            <person name="Kronstad J.W."/>
            <person name="Gold S.E."/>
            <person name="Mueller O."/>
            <person name="Perlin M.H."/>
            <person name="Woesten H.A.B."/>
            <person name="de Vries R."/>
            <person name="Ruiz-Herrera J."/>
            <person name="Reynaga-Pena C.G."/>
            <person name="Snetselaar K."/>
            <person name="McCann M."/>
            <person name="Perez-Martin J."/>
            <person name="Feldbruegge M."/>
            <person name="Basse C.W."/>
            <person name="Steinberg G."/>
            <person name="Ibeas J.I."/>
            <person name="Holloman W."/>
            <person name="Guzman P."/>
            <person name="Farman M.L."/>
            <person name="Stajich J.E."/>
            <person name="Sentandreu R."/>
            <person name="Gonzalez-Prieto J.M."/>
            <person name="Kennell J.C."/>
            <person name="Molina L."/>
            <person name="Schirawski J."/>
            <person name="Mendoza-Mendoza A."/>
            <person name="Greilinger D."/>
            <person name="Muench K."/>
            <person name="Roessel N."/>
            <person name="Scherer M."/>
            <person name="Vranes M."/>
            <person name="Ladendorf O."/>
            <person name="Vincon V."/>
            <person name="Fuchs U."/>
            <person name="Sandrock B."/>
            <person name="Meng S."/>
            <person name="Ho E.C.H."/>
            <person name="Cahill M.J."/>
            <person name="Boyce K.J."/>
            <person name="Klose J."/>
            <person name="Klosterman S.J."/>
            <person name="Deelstra H.J."/>
            <person name="Ortiz-Castellanos L."/>
            <person name="Li W."/>
            <person name="Sanchez-Alonso P."/>
            <person name="Schreier P.H."/>
            <person name="Haeuser-Hahn I."/>
            <person name="Vaupel M."/>
            <person name="Koopmann E."/>
            <person name="Friedrich G."/>
            <person name="Voss H."/>
            <person name="Schlueter T."/>
            <person name="Margolis J."/>
            <person name="Platt D."/>
            <person name="Swimmer C."/>
            <person name="Gnirke A."/>
            <person name="Chen F."/>
            <person name="Vysotskaia V."/>
            <person name="Mannhaupt G."/>
            <person name="Gueldener U."/>
            <person name="Muensterkoetter M."/>
            <person name="Haase D."/>
            <person name="Oesterheld M."/>
            <person name="Mewes H.-W."/>
            <person name="Mauceli E.W."/>
            <person name="DeCaprio D."/>
            <person name="Wade C.M."/>
            <person name="Butler J."/>
            <person name="Young S.K."/>
            <person name="Jaffe D.B."/>
            <person name="Calvo S.E."/>
            <person name="Nusbaum C."/>
            <person name="Galagan J.E."/>
            <person name="Birren B.W."/>
        </authorList>
    </citation>
    <scope>NUCLEOTIDE SEQUENCE [LARGE SCALE GENOMIC DNA]</scope>
    <source>
        <strain>DSM 14603 / FGSC 9021 / UM521</strain>
    </source>
</reference>
<reference key="2">
    <citation type="submission" date="2014-09" db="EMBL/GenBank/DDBJ databases">
        <authorList>
            <person name="Gueldener U."/>
            <person name="Muensterkoetter M."/>
            <person name="Walter M.C."/>
            <person name="Mannhaupt G."/>
            <person name="Kahmann R."/>
        </authorList>
    </citation>
    <scope>GENOME REANNOTATION</scope>
    <source>
        <strain>DSM 14603 / FGSC 9021 / UM521</strain>
    </source>
</reference>
<comment type="function">
    <text evidence="1">Histone methyltransferase that monomethylates 'Lys-5', 'Lys-8' and 'Lys-12' of histone H4 (H4K5me1, H4K8me1 and H4K12me1, respectively), thereby controlling gene expression and remodeling chromatin structures.</text>
</comment>
<comment type="catalytic activity">
    <reaction evidence="1">
        <text>L-lysyl-[histone] + S-adenosyl-L-methionine = N(6)-methyl-L-lysyl-[histone] + S-adenosyl-L-homocysteine + H(+)</text>
        <dbReference type="Rhea" id="RHEA:10024"/>
        <dbReference type="Rhea" id="RHEA-COMP:9845"/>
        <dbReference type="Rhea" id="RHEA-COMP:9846"/>
        <dbReference type="ChEBI" id="CHEBI:15378"/>
        <dbReference type="ChEBI" id="CHEBI:29969"/>
        <dbReference type="ChEBI" id="CHEBI:57856"/>
        <dbReference type="ChEBI" id="CHEBI:59789"/>
        <dbReference type="ChEBI" id="CHEBI:61929"/>
    </reaction>
    <physiologicalReaction direction="left-to-right" evidence="1">
        <dbReference type="Rhea" id="RHEA:10025"/>
    </physiologicalReaction>
</comment>
<comment type="subcellular location">
    <subcellularLocation>
        <location evidence="1">Nucleus</location>
    </subcellularLocation>
    <subcellularLocation>
        <location evidence="1">Chromosome</location>
    </subcellularLocation>
    <subcellularLocation>
        <location evidence="1">Cytoplasm</location>
    </subcellularLocation>
</comment>
<comment type="similarity">
    <text evidence="2">Belongs to the class V-like SAM-binding methyltransferase superfamily. Histone-lysine methyltransferase family. SET5 subfamily.</text>
</comment>
<proteinExistence type="inferred from homology"/>
<accession>Q4PBP5</accession>
<accession>A0A0D1E207</accession>